<organism>
    <name type="scientific">Debaryomyces hansenii (strain ATCC 36239 / CBS 767 / BCRC 21394 / JCM 1990 / NBRC 0083 / IGC 2968)</name>
    <name type="common">Yeast</name>
    <name type="synonym">Torulaspora hansenii</name>
    <dbReference type="NCBI Taxonomy" id="284592"/>
    <lineage>
        <taxon>Eukaryota</taxon>
        <taxon>Fungi</taxon>
        <taxon>Dikarya</taxon>
        <taxon>Ascomycota</taxon>
        <taxon>Saccharomycotina</taxon>
        <taxon>Pichiomycetes</taxon>
        <taxon>Debaryomycetaceae</taxon>
        <taxon>Debaryomyces</taxon>
    </lineage>
</organism>
<feature type="chain" id="PRO_0000249832" description="Decapping nuclease RAI1">
    <location>
        <begin position="1"/>
        <end position="385"/>
    </location>
</feature>
<feature type="binding site" evidence="1">
    <location>
        <position position="173"/>
    </location>
    <ligand>
        <name>a divalent metal cation</name>
        <dbReference type="ChEBI" id="CHEBI:60240"/>
    </ligand>
</feature>
<feature type="binding site" evidence="2">
    <location>
        <position position="222"/>
    </location>
    <ligand>
        <name>substrate</name>
    </ligand>
</feature>
<feature type="binding site" evidence="1">
    <location>
        <position position="224"/>
    </location>
    <ligand>
        <name>a divalent metal cation</name>
        <dbReference type="ChEBI" id="CHEBI:60240"/>
    </ligand>
</feature>
<feature type="binding site" evidence="1">
    <location>
        <position position="243"/>
    </location>
    <ligand>
        <name>a divalent metal cation</name>
        <dbReference type="ChEBI" id="CHEBI:60240"/>
    </ligand>
</feature>
<feature type="binding site" evidence="1">
    <location>
        <position position="244"/>
    </location>
    <ligand>
        <name>a divalent metal cation</name>
        <dbReference type="ChEBI" id="CHEBI:60240"/>
    </ligand>
</feature>
<feature type="binding site" evidence="2">
    <location>
        <position position="245"/>
    </location>
    <ligand>
        <name>substrate</name>
    </ligand>
</feature>
<feature type="binding site" evidence="2">
    <location>
        <position position="269"/>
    </location>
    <ligand>
        <name>substrate</name>
    </ligand>
</feature>
<reference key="1">
    <citation type="journal article" date="2004" name="Nature">
        <title>Genome evolution in yeasts.</title>
        <authorList>
            <person name="Dujon B."/>
            <person name="Sherman D."/>
            <person name="Fischer G."/>
            <person name="Durrens P."/>
            <person name="Casaregola S."/>
            <person name="Lafontaine I."/>
            <person name="de Montigny J."/>
            <person name="Marck C."/>
            <person name="Neuveglise C."/>
            <person name="Talla E."/>
            <person name="Goffard N."/>
            <person name="Frangeul L."/>
            <person name="Aigle M."/>
            <person name="Anthouard V."/>
            <person name="Babour A."/>
            <person name="Barbe V."/>
            <person name="Barnay S."/>
            <person name="Blanchin S."/>
            <person name="Beckerich J.-M."/>
            <person name="Beyne E."/>
            <person name="Bleykasten C."/>
            <person name="Boisrame A."/>
            <person name="Boyer J."/>
            <person name="Cattolico L."/>
            <person name="Confanioleri F."/>
            <person name="de Daruvar A."/>
            <person name="Despons L."/>
            <person name="Fabre E."/>
            <person name="Fairhead C."/>
            <person name="Ferry-Dumazet H."/>
            <person name="Groppi A."/>
            <person name="Hantraye F."/>
            <person name="Hennequin C."/>
            <person name="Jauniaux N."/>
            <person name="Joyet P."/>
            <person name="Kachouri R."/>
            <person name="Kerrest A."/>
            <person name="Koszul R."/>
            <person name="Lemaire M."/>
            <person name="Lesur I."/>
            <person name="Ma L."/>
            <person name="Muller H."/>
            <person name="Nicaud J.-M."/>
            <person name="Nikolski M."/>
            <person name="Oztas S."/>
            <person name="Ozier-Kalogeropoulos O."/>
            <person name="Pellenz S."/>
            <person name="Potier S."/>
            <person name="Richard G.-F."/>
            <person name="Straub M.-L."/>
            <person name="Suleau A."/>
            <person name="Swennen D."/>
            <person name="Tekaia F."/>
            <person name="Wesolowski-Louvel M."/>
            <person name="Westhof E."/>
            <person name="Wirth B."/>
            <person name="Zeniou-Meyer M."/>
            <person name="Zivanovic Y."/>
            <person name="Bolotin-Fukuhara M."/>
            <person name="Thierry A."/>
            <person name="Bouchier C."/>
            <person name="Caudron B."/>
            <person name="Scarpelli C."/>
            <person name="Gaillardin C."/>
            <person name="Weissenbach J."/>
            <person name="Wincker P."/>
            <person name="Souciet J.-L."/>
        </authorList>
    </citation>
    <scope>NUCLEOTIDE SEQUENCE [LARGE SCALE GENOMIC DNA]</scope>
    <source>
        <strain>ATCC 36239 / CBS 767 / BCRC 21394 / JCM 1990 / NBRC 0083 / IGC 2968</strain>
    </source>
</reference>
<proteinExistence type="inferred from homology"/>
<protein>
    <recommendedName>
        <fullName evidence="6">Decapping nuclease RAI1</fullName>
        <ecNumber evidence="5">3.6.1.-</ecNumber>
    </recommendedName>
    <alternativeName>
        <fullName evidence="6">NAD-capped RNA hydrolase RAI1</fullName>
        <shortName evidence="6">DeNADding enzyme RAI1</shortName>
        <ecNumber evidence="1">3.6.1.-</ecNumber>
    </alternativeName>
</protein>
<accession>Q6BLU6</accession>
<accession>B5RUD9</accession>
<sequence length="385" mass="44597">MIKTFPLNSRAKTTALKQPKELFSFARDIDGEYIFDSTKVQDENLSYYYLPDASVDKQIDLGAGYSNFKKIPEEENLGDFPALLKGVMNYEQSTGTKINSDIITFRGLMTKILTLPYNLKDPLDLHVIVYDGQLFIKNNDEIELKRRQQNNQHEDPSKQEMMKKFEYSGYKFEAVSTLPKPWGDCSRQLIEKRNKKVVNNYEQYISVVKTGIGKVKLLLAGEVDCLWDYIPEDGKDILPHYVELKTSKVIEAPGQVVNFEKKLFRTWAQSFLIGIRKIVYGFRDDNLILRNVEVYNTEEIPIMLKDTINVNTKIVCMNALKWYGAVIEWINNEIPKDADKSWSLTYDPGSKSFSIVELMQDSELRNSVITEDFKEWRISLHKTES</sequence>
<name>DXO_DEBHA</name>
<gene>
    <name type="primary">RAI1</name>
    <name type="ordered locus">DEHA2F10626g</name>
</gene>
<dbReference type="EC" id="3.6.1.-" evidence="5 1"/>
<dbReference type="EMBL" id="CR382138">
    <property type="protein sequence ID" value="CAR66317.1"/>
    <property type="molecule type" value="Genomic_DNA"/>
</dbReference>
<dbReference type="RefSeq" id="XP_002770792.1">
    <property type="nucleotide sequence ID" value="XM_002770746.1"/>
</dbReference>
<dbReference type="SMR" id="Q6BLU6"/>
<dbReference type="FunCoup" id="Q6BLU6">
    <property type="interactions" value="664"/>
</dbReference>
<dbReference type="STRING" id="284592.Q6BLU6"/>
<dbReference type="GeneID" id="8998938"/>
<dbReference type="KEGG" id="dha:DEHA2F10626g"/>
<dbReference type="VEuPathDB" id="FungiDB:DEHA2F10626g"/>
<dbReference type="eggNOG" id="KOG1982">
    <property type="taxonomic scope" value="Eukaryota"/>
</dbReference>
<dbReference type="HOGENOM" id="CLU_024877_4_1_1"/>
<dbReference type="InParanoid" id="Q6BLU6"/>
<dbReference type="OMA" id="VVTWRGH"/>
<dbReference type="OrthoDB" id="5853397at2759"/>
<dbReference type="Proteomes" id="UP000000599">
    <property type="component" value="Chromosome F"/>
</dbReference>
<dbReference type="GO" id="GO:0090730">
    <property type="term" value="C:Las1 complex"/>
    <property type="evidence" value="ECO:0007669"/>
    <property type="project" value="EnsemblFungi"/>
</dbReference>
<dbReference type="GO" id="GO:0110103">
    <property type="term" value="C:RNA polymerase II termination complex"/>
    <property type="evidence" value="ECO:0007669"/>
    <property type="project" value="EnsemblFungi"/>
</dbReference>
<dbReference type="GO" id="GO:0030234">
    <property type="term" value="F:enzyme regulator activity"/>
    <property type="evidence" value="ECO:0007669"/>
    <property type="project" value="EnsemblFungi"/>
</dbReference>
<dbReference type="GO" id="GO:0046872">
    <property type="term" value="F:metal ion binding"/>
    <property type="evidence" value="ECO:0007669"/>
    <property type="project" value="UniProtKB-KW"/>
</dbReference>
<dbReference type="GO" id="GO:0034353">
    <property type="term" value="F:mRNA 5'-diphosphatase activity"/>
    <property type="evidence" value="ECO:0007669"/>
    <property type="project" value="EnsemblFungi"/>
</dbReference>
<dbReference type="GO" id="GO:0000166">
    <property type="term" value="F:nucleotide binding"/>
    <property type="evidence" value="ECO:0007669"/>
    <property type="project" value="UniProtKB-KW"/>
</dbReference>
<dbReference type="GO" id="GO:1990174">
    <property type="term" value="F:phosphodiesterase decapping endonuclease activity"/>
    <property type="evidence" value="ECO:0007669"/>
    <property type="project" value="EnsemblFungi"/>
</dbReference>
<dbReference type="GO" id="GO:0003723">
    <property type="term" value="F:RNA binding"/>
    <property type="evidence" value="ECO:0007669"/>
    <property type="project" value="UniProtKB-KW"/>
</dbReference>
<dbReference type="GO" id="GO:0110152">
    <property type="term" value="F:RNA NAD+-cap (NAD+-forming) hydrolase activity"/>
    <property type="evidence" value="ECO:0007669"/>
    <property type="project" value="RHEA"/>
</dbReference>
<dbReference type="GO" id="GO:0000448">
    <property type="term" value="P:cleavage in ITS2 between 5.8S rRNA and LSU-rRNA of tricistronic rRNA transcript (SSU-rRNA, 5.8S rRNA, LSU-rRNA)"/>
    <property type="evidence" value="ECO:0007669"/>
    <property type="project" value="EnsemblFungi"/>
</dbReference>
<dbReference type="GO" id="GO:0031087">
    <property type="term" value="P:deadenylation-independent decapping of nuclear-transcribed mRNA"/>
    <property type="evidence" value="ECO:0007669"/>
    <property type="project" value="EnsemblFungi"/>
</dbReference>
<dbReference type="GO" id="GO:0006397">
    <property type="term" value="P:mRNA processing"/>
    <property type="evidence" value="ECO:0007669"/>
    <property type="project" value="UniProtKB-KW"/>
</dbReference>
<dbReference type="GO" id="GO:0110155">
    <property type="term" value="P:NAD-cap decapping"/>
    <property type="evidence" value="ECO:0007669"/>
    <property type="project" value="EnsemblFungi"/>
</dbReference>
<dbReference type="GO" id="GO:0071035">
    <property type="term" value="P:nuclear polyadenylation-dependent rRNA catabolic process"/>
    <property type="evidence" value="ECO:0007669"/>
    <property type="project" value="EnsemblFungi"/>
</dbReference>
<dbReference type="GO" id="GO:1904595">
    <property type="term" value="P:positive regulation of termination of RNA polymerase II transcription"/>
    <property type="evidence" value="ECO:0007669"/>
    <property type="project" value="EnsemblFungi"/>
</dbReference>
<dbReference type="GO" id="GO:0030846">
    <property type="term" value="P:termination of RNA polymerase II transcription, poly(A)-coupled"/>
    <property type="evidence" value="ECO:0007669"/>
    <property type="project" value="EnsemblFungi"/>
</dbReference>
<dbReference type="InterPro" id="IPR013961">
    <property type="entry name" value="RAI1"/>
</dbReference>
<dbReference type="InterPro" id="IPR039039">
    <property type="entry name" value="RAI1-like_fam"/>
</dbReference>
<dbReference type="PANTHER" id="PTHR12395:SF9">
    <property type="entry name" value="DECAPPING AND EXORIBONUCLEASE PROTEIN"/>
    <property type="match status" value="1"/>
</dbReference>
<dbReference type="PANTHER" id="PTHR12395">
    <property type="entry name" value="DOM-3 RELATED"/>
    <property type="match status" value="1"/>
</dbReference>
<dbReference type="Pfam" id="PF08652">
    <property type="entry name" value="RAI1"/>
    <property type="match status" value="1"/>
</dbReference>
<keyword id="KW-0378">Hydrolase</keyword>
<keyword id="KW-0479">Metal-binding</keyword>
<keyword id="KW-0507">mRNA processing</keyword>
<keyword id="KW-0540">Nuclease</keyword>
<keyword id="KW-0547">Nucleotide-binding</keyword>
<keyword id="KW-0539">Nucleus</keyword>
<keyword id="KW-1185">Reference proteome</keyword>
<keyword id="KW-0694">RNA-binding</keyword>
<evidence type="ECO:0000250" key="1">
    <source>
        <dbReference type="UniProtKB" id="O13836"/>
    </source>
</evidence>
<evidence type="ECO:0000250" key="2">
    <source>
        <dbReference type="UniProtKB" id="O70348"/>
    </source>
</evidence>
<evidence type="ECO:0000250" key="3">
    <source>
        <dbReference type="UniProtKB" id="P53063"/>
    </source>
</evidence>
<evidence type="ECO:0000250" key="4">
    <source>
        <dbReference type="UniProtKB" id="Q06349"/>
    </source>
</evidence>
<evidence type="ECO:0000250" key="5">
    <source>
        <dbReference type="UniProtKB" id="Q5AAT0"/>
    </source>
</evidence>
<evidence type="ECO:0000305" key="6"/>
<comment type="function">
    <text evidence="1 2 4 5">Decapping enzyme for NAD-capped RNAs: specifically hydrolyzes the nicotinamide adenine dinucleotide (NAD) cap from a subset of RNAs by removing the entire NAD moiety from the 5'-end of an NAD-capped RNA (By similarity). The NAD-cap is present at the 5'-end of some RNAs and snoRNAs. In contrast to the canonical 5'-end N7 methylguanosine (m7G) cap, the NAD cap promotes mRNA decay (By similarity). Also acts as a non-canonical decapping enzyme that removes the entire cap structure of m7G capped or incompletely capped RNAs (By similarity). Has decapping activity toward incomplete 5'-end m7G cap mRNAs such as unmethylated 5'-end-capped RNA (cap0), while it has no activity toward 2'-O-ribose methylated m7G cap (cap1) (By similarity). Also possesses RNA 5'-pyrophosphohydrolase activity by hydrolyzing the 5'-end triphosphate to release pyrophosphates (By similarity). Stimulates exoribonuclease activity of Rat1, allowing it to degrade RNAs with stable secondary structure more effectively (By similarity).</text>
</comment>
<comment type="catalytic activity">
    <reaction evidence="1">
        <text>a 5'-end NAD(+)-phospho-ribonucleoside in mRNA + H2O = a 5'-end phospho-ribonucleoside in mRNA + NAD(+) + H(+)</text>
        <dbReference type="Rhea" id="RHEA:60880"/>
        <dbReference type="Rhea" id="RHEA-COMP:15692"/>
        <dbReference type="Rhea" id="RHEA-COMP:15698"/>
        <dbReference type="ChEBI" id="CHEBI:15377"/>
        <dbReference type="ChEBI" id="CHEBI:15378"/>
        <dbReference type="ChEBI" id="CHEBI:57540"/>
        <dbReference type="ChEBI" id="CHEBI:138282"/>
        <dbReference type="ChEBI" id="CHEBI:144029"/>
    </reaction>
    <physiologicalReaction direction="left-to-right" evidence="1">
        <dbReference type="Rhea" id="RHEA:60881"/>
    </physiologicalReaction>
</comment>
<comment type="catalytic activity">
    <reaction evidence="3">
        <text>a 5'-end (N(7)-methyl 5'-triphosphoguanosine)-ribonucleoside-ribonucleotide in mRNA + H2O = a (N(7)-methyl 5'-triphosphoguanosine)-nucleoside + a 5'-end phospho-ribonucleoside in mRNA + H(+)</text>
        <dbReference type="Rhea" id="RHEA:66928"/>
        <dbReference type="Rhea" id="RHEA-COMP:15692"/>
        <dbReference type="Rhea" id="RHEA-COMP:17313"/>
        <dbReference type="ChEBI" id="CHEBI:15377"/>
        <dbReference type="ChEBI" id="CHEBI:15378"/>
        <dbReference type="ChEBI" id="CHEBI:138282"/>
        <dbReference type="ChEBI" id="CHEBI:172876"/>
        <dbReference type="ChEBI" id="CHEBI:172877"/>
    </reaction>
    <physiologicalReaction direction="left-to-right" evidence="3">
        <dbReference type="Rhea" id="RHEA:66929"/>
    </physiologicalReaction>
</comment>
<comment type="catalytic activity">
    <reaction evidence="1">
        <text>a 5'-end triphospho-ribonucleoside in mRNA + H2O = a 5'-end phospho-ribonucleoside in mRNA + diphosphate + H(+)</text>
        <dbReference type="Rhea" id="RHEA:78683"/>
        <dbReference type="Rhea" id="RHEA-COMP:15692"/>
        <dbReference type="Rhea" id="RHEA-COMP:17164"/>
        <dbReference type="ChEBI" id="CHEBI:15377"/>
        <dbReference type="ChEBI" id="CHEBI:15378"/>
        <dbReference type="ChEBI" id="CHEBI:33019"/>
        <dbReference type="ChEBI" id="CHEBI:138282"/>
        <dbReference type="ChEBI" id="CHEBI:167618"/>
    </reaction>
    <physiologicalReaction direction="left-to-right" evidence="1">
        <dbReference type="Rhea" id="RHEA:78684"/>
    </physiologicalReaction>
</comment>
<comment type="cofactor">
    <cofactor evidence="5">
        <name>a divalent metal cation</name>
        <dbReference type="ChEBI" id="CHEBI:60240"/>
    </cofactor>
    <text evidence="5">Divalent metal cation.</text>
</comment>
<comment type="subunit">
    <text evidence="1">Interacts with RAT1; the interaction is direct, stabilizes RAT1 protein structure and stimulates its exoribonuclease activity (By similarity). The interaction also stimulates RAI1 pyrophosphohydrolase activity, probably by recruiting it to mRNA substrates (By similarity).</text>
</comment>
<comment type="subcellular location">
    <subcellularLocation>
        <location evidence="3">Nucleus</location>
    </subcellularLocation>
</comment>
<comment type="similarity">
    <text evidence="6">Belongs to the DXO/Dom3Z family.</text>
</comment>